<organism>
    <name type="scientific">Eremothecium gossypii (strain ATCC 10895 / CBS 109.51 / FGSC 9923 / NRRL Y-1056)</name>
    <name type="common">Yeast</name>
    <name type="synonym">Ashbya gossypii</name>
    <dbReference type="NCBI Taxonomy" id="284811"/>
    <lineage>
        <taxon>Eukaryota</taxon>
        <taxon>Fungi</taxon>
        <taxon>Dikarya</taxon>
        <taxon>Ascomycota</taxon>
        <taxon>Saccharomycotina</taxon>
        <taxon>Saccharomycetes</taxon>
        <taxon>Saccharomycetales</taxon>
        <taxon>Saccharomycetaceae</taxon>
        <taxon>Eremothecium</taxon>
    </lineage>
</organism>
<sequence length="528" mass="59697">MPSDASTGYVDDQPGDEAYKRGALYKQTKARRADYDSDKEAKRPCTEDSDVALAGTSEEKEARLPKRKVAVMVGYCGTGYHGMQYNPPNRTIEAELFEAFVKAGAISRANSTDLKKNGFMRAARTDKGVHAGGNVISLKLIIEDPAIKDKINEHLPPGIRVWGISRVNKAFDCRKLCGSRWYEYLLPTYSFIGPKPNTYLARTIEQCGEAASEKPDRDQESLDFWEAFRKAVDEKFTQEEQDAIVNYVAPSKEDFDENSGLYQKVKQYKQMENAHRRSYRVSSAKLARFREAMKQYLGPHNFHNYTLGKDFKDPSTVRFMKDITVSDPFVIGEMKTEWVSIKIHGQSFMLHQIRKMISMATLVARCNCSPERIAQSYGPQKINIPKAPALGLLLESPVYEGYNKRLLEFGYEPIDFRNYQKEMDTFKMVHIYDKIYKEEVDENVFNAFFNYIDAFNQVTGAQGEPTKSHDPAKIQLSIIDFLLPCSSSPQENASPEAQKAPETPAGDNTISAEQPKTATEVPTTQSDA</sequence>
<comment type="function">
    <text evidence="2">Formation of pseudouridine at positions 27 and 28 in the anticodon stem and loop of transfer RNAs; at positions 34 and 36 of intron-containing precursor tRNA(Ile) and at position 35 in the intron-containing tRNA(Tyr). Catalyzes pseudouridylation at position 44 in U2 snRNA. Also catalyzes pseudouridylation of mRNAs.</text>
</comment>
<comment type="catalytic activity">
    <reaction evidence="2">
        <text>a uridine in tRNA = a pseudouridine in tRNA</text>
        <dbReference type="Rhea" id="RHEA:54572"/>
        <dbReference type="Rhea" id="RHEA-COMP:13339"/>
        <dbReference type="Rhea" id="RHEA-COMP:13934"/>
        <dbReference type="ChEBI" id="CHEBI:65314"/>
        <dbReference type="ChEBI" id="CHEBI:65315"/>
    </reaction>
</comment>
<comment type="catalytic activity">
    <reaction evidence="2">
        <text>uridine in snRNA = pseudouridine in snRNA</text>
        <dbReference type="Rhea" id="RHEA:51124"/>
        <dbReference type="Rhea" id="RHEA-COMP:12891"/>
        <dbReference type="Rhea" id="RHEA-COMP:12892"/>
        <dbReference type="ChEBI" id="CHEBI:65314"/>
        <dbReference type="ChEBI" id="CHEBI:65315"/>
    </reaction>
</comment>
<comment type="catalytic activity">
    <reaction evidence="2">
        <text>a uridine in mRNA = a pseudouridine in mRNA</text>
        <dbReference type="Rhea" id="RHEA:56644"/>
        <dbReference type="Rhea" id="RHEA-COMP:14658"/>
        <dbReference type="Rhea" id="RHEA-COMP:14659"/>
        <dbReference type="ChEBI" id="CHEBI:65314"/>
        <dbReference type="ChEBI" id="CHEBI:65315"/>
    </reaction>
</comment>
<comment type="cofactor">
    <cofactor evidence="2">
        <name>Zn(2+)</name>
        <dbReference type="ChEBI" id="CHEBI:29105"/>
    </cofactor>
    <text evidence="2">Binds 1 zinc ion per subunit.</text>
</comment>
<comment type="subcellular location">
    <subcellularLocation>
        <location evidence="2">Nucleus</location>
    </subcellularLocation>
</comment>
<comment type="similarity">
    <text evidence="4">Belongs to the tRNA pseudouridine synthase TruA family.</text>
</comment>
<proteinExistence type="inferred from homology"/>
<keyword id="KW-0413">Isomerase</keyword>
<keyword id="KW-0479">Metal-binding</keyword>
<keyword id="KW-0507">mRNA processing</keyword>
<keyword id="KW-0539">Nucleus</keyword>
<keyword id="KW-1185">Reference proteome</keyword>
<keyword id="KW-0819">tRNA processing</keyword>
<keyword id="KW-0862">Zinc</keyword>
<name>PUS1_EREGS</name>
<reference key="1">
    <citation type="journal article" date="2004" name="Science">
        <title>The Ashbya gossypii genome as a tool for mapping the ancient Saccharomyces cerevisiae genome.</title>
        <authorList>
            <person name="Dietrich F.S."/>
            <person name="Voegeli S."/>
            <person name="Brachat S."/>
            <person name="Lerch A."/>
            <person name="Gates K."/>
            <person name="Steiner S."/>
            <person name="Mohr C."/>
            <person name="Poehlmann R."/>
            <person name="Luedi P."/>
            <person name="Choi S."/>
            <person name="Wing R.A."/>
            <person name="Flavier A."/>
            <person name="Gaffney T.D."/>
            <person name="Philippsen P."/>
        </authorList>
    </citation>
    <scope>NUCLEOTIDE SEQUENCE [LARGE SCALE GENOMIC DNA]</scope>
    <source>
        <strain>ATCC 10895 / CBS 109.51 / FGSC 9923 / NRRL Y-1056</strain>
    </source>
</reference>
<reference key="2">
    <citation type="journal article" date="2013" name="G3 (Bethesda)">
        <title>Genomes of Ashbya fungi isolated from insects reveal four mating-type loci, numerous translocations, lack of transposons, and distinct gene duplications.</title>
        <authorList>
            <person name="Dietrich F.S."/>
            <person name="Voegeli S."/>
            <person name="Kuo S."/>
            <person name="Philippsen P."/>
        </authorList>
    </citation>
    <scope>GENOME REANNOTATION</scope>
    <scope>SEQUENCE REVISION TO 327</scope>
    <source>
        <strain>ATCC 10895 / CBS 109.51 / FGSC 9923 / NRRL Y-1056</strain>
    </source>
</reference>
<accession>Q755C8</accession>
<gene>
    <name type="primary">PUS1</name>
    <name type="ordered locus">AFL105C</name>
</gene>
<dbReference type="EC" id="5.4.99.-" evidence="2"/>
<dbReference type="EMBL" id="AE016819">
    <property type="protein sequence ID" value="AAS53269.2"/>
    <property type="molecule type" value="Genomic_DNA"/>
</dbReference>
<dbReference type="RefSeq" id="NP_985445.2">
    <property type="nucleotide sequence ID" value="NM_210799.2"/>
</dbReference>
<dbReference type="SMR" id="Q755C8"/>
<dbReference type="FunCoup" id="Q755C8">
    <property type="interactions" value="1058"/>
</dbReference>
<dbReference type="STRING" id="284811.Q755C8"/>
<dbReference type="EnsemblFungi" id="AAS53269">
    <property type="protein sequence ID" value="AAS53269"/>
    <property type="gene ID" value="AGOS_AFL105C"/>
</dbReference>
<dbReference type="GeneID" id="4621672"/>
<dbReference type="KEGG" id="ago:AGOS_AFL105C"/>
<dbReference type="eggNOG" id="KOG2553">
    <property type="taxonomic scope" value="Eukaryota"/>
</dbReference>
<dbReference type="HOGENOM" id="CLU_021971_0_1_1"/>
<dbReference type="InParanoid" id="Q755C8"/>
<dbReference type="OMA" id="NKAFDCR"/>
<dbReference type="OrthoDB" id="10256309at2759"/>
<dbReference type="Proteomes" id="UP000000591">
    <property type="component" value="Chromosome VI"/>
</dbReference>
<dbReference type="GO" id="GO:0005634">
    <property type="term" value="C:nucleus"/>
    <property type="evidence" value="ECO:0000318"/>
    <property type="project" value="GO_Central"/>
</dbReference>
<dbReference type="GO" id="GO:0046872">
    <property type="term" value="F:metal ion binding"/>
    <property type="evidence" value="ECO:0007669"/>
    <property type="project" value="UniProtKB-KW"/>
</dbReference>
<dbReference type="GO" id="GO:0009982">
    <property type="term" value="F:pseudouridine synthase activity"/>
    <property type="evidence" value="ECO:0000318"/>
    <property type="project" value="GO_Central"/>
</dbReference>
<dbReference type="GO" id="GO:0003723">
    <property type="term" value="F:RNA binding"/>
    <property type="evidence" value="ECO:0007669"/>
    <property type="project" value="InterPro"/>
</dbReference>
<dbReference type="GO" id="GO:0106032">
    <property type="term" value="F:snRNA pseudouridine synthase activity"/>
    <property type="evidence" value="ECO:0007669"/>
    <property type="project" value="RHEA"/>
</dbReference>
<dbReference type="GO" id="GO:0106029">
    <property type="term" value="F:tRNA pseudouridine synthase activity"/>
    <property type="evidence" value="ECO:0007669"/>
    <property type="project" value="RHEA"/>
</dbReference>
<dbReference type="GO" id="GO:0006397">
    <property type="term" value="P:mRNA processing"/>
    <property type="evidence" value="ECO:0007669"/>
    <property type="project" value="UniProtKB-KW"/>
</dbReference>
<dbReference type="GO" id="GO:1990481">
    <property type="term" value="P:mRNA pseudouridine synthesis"/>
    <property type="evidence" value="ECO:0000318"/>
    <property type="project" value="GO_Central"/>
</dbReference>
<dbReference type="GO" id="GO:0031120">
    <property type="term" value="P:snRNA pseudouridine synthesis"/>
    <property type="evidence" value="ECO:0007669"/>
    <property type="project" value="EnsemblFungi"/>
</dbReference>
<dbReference type="GO" id="GO:0031119">
    <property type="term" value="P:tRNA pseudouridine synthesis"/>
    <property type="evidence" value="ECO:0000318"/>
    <property type="project" value="GO_Central"/>
</dbReference>
<dbReference type="CDD" id="cd02568">
    <property type="entry name" value="PseudoU_synth_PUS1_PUS2"/>
    <property type="match status" value="1"/>
</dbReference>
<dbReference type="FunFam" id="3.30.70.580:FF:000002">
    <property type="entry name" value="tRNA pseudouridine synthase"/>
    <property type="match status" value="1"/>
</dbReference>
<dbReference type="FunFam" id="3.30.70.660:FF:000002">
    <property type="entry name" value="tRNA pseudouridine synthase"/>
    <property type="match status" value="1"/>
</dbReference>
<dbReference type="Gene3D" id="3.30.70.660">
    <property type="entry name" value="Pseudouridine synthase I, catalytic domain, C-terminal subdomain"/>
    <property type="match status" value="1"/>
</dbReference>
<dbReference type="Gene3D" id="3.30.70.580">
    <property type="entry name" value="Pseudouridine synthase I, catalytic domain, N-terminal subdomain"/>
    <property type="match status" value="1"/>
</dbReference>
<dbReference type="InterPro" id="IPR020103">
    <property type="entry name" value="PsdUridine_synth_cat_dom_sf"/>
</dbReference>
<dbReference type="InterPro" id="IPR001406">
    <property type="entry name" value="PsdUridine_synth_TruA"/>
</dbReference>
<dbReference type="InterPro" id="IPR020097">
    <property type="entry name" value="PsdUridine_synth_TruA_a/b_dom"/>
</dbReference>
<dbReference type="InterPro" id="IPR020095">
    <property type="entry name" value="PsdUridine_synth_TruA_C"/>
</dbReference>
<dbReference type="InterPro" id="IPR041708">
    <property type="entry name" value="PUS1/PUS2-like"/>
</dbReference>
<dbReference type="InterPro" id="IPR020094">
    <property type="entry name" value="TruA/RsuA/RluB/E/F_N"/>
</dbReference>
<dbReference type="NCBIfam" id="TIGR00071">
    <property type="entry name" value="hisT_truA"/>
    <property type="match status" value="1"/>
</dbReference>
<dbReference type="PANTHER" id="PTHR11142">
    <property type="entry name" value="PSEUDOURIDYLATE SYNTHASE"/>
    <property type="match status" value="1"/>
</dbReference>
<dbReference type="PANTHER" id="PTHR11142:SF4">
    <property type="entry name" value="PSEUDOURIDYLATE SYNTHASE 1 HOMOLOG"/>
    <property type="match status" value="1"/>
</dbReference>
<dbReference type="Pfam" id="PF01416">
    <property type="entry name" value="PseudoU_synth_1"/>
    <property type="match status" value="1"/>
</dbReference>
<dbReference type="SUPFAM" id="SSF55120">
    <property type="entry name" value="Pseudouridine synthase"/>
    <property type="match status" value="1"/>
</dbReference>
<evidence type="ECO:0000250" key="1">
    <source>
        <dbReference type="UniProtKB" id="P07649"/>
    </source>
</evidence>
<evidence type="ECO:0000250" key="2">
    <source>
        <dbReference type="UniProtKB" id="Q12211"/>
    </source>
</evidence>
<evidence type="ECO:0000256" key="3">
    <source>
        <dbReference type="SAM" id="MobiDB-lite"/>
    </source>
</evidence>
<evidence type="ECO:0000305" key="4"/>
<protein>
    <recommendedName>
        <fullName>tRNA pseudouridine synthase 1</fullName>
        <ecNumber evidence="2">5.4.99.-</ecNumber>
    </recommendedName>
    <alternativeName>
        <fullName>tRNA pseudouridylate synthase 1</fullName>
    </alternativeName>
    <alternativeName>
        <fullName>tRNA-uridine isomerase 1</fullName>
    </alternativeName>
</protein>
<feature type="chain" id="PRO_0000057524" description="tRNA pseudouridine synthase 1">
    <location>
        <begin position="1"/>
        <end position="528"/>
    </location>
</feature>
<feature type="region of interest" description="Disordered" evidence="3">
    <location>
        <begin position="1"/>
        <end position="59"/>
    </location>
</feature>
<feature type="region of interest" description="Disordered" evidence="3">
    <location>
        <begin position="486"/>
        <end position="528"/>
    </location>
</feature>
<feature type="compositionally biased region" description="Basic and acidic residues" evidence="3">
    <location>
        <begin position="31"/>
        <end position="46"/>
    </location>
</feature>
<feature type="compositionally biased region" description="Polar residues" evidence="3">
    <location>
        <begin position="486"/>
        <end position="495"/>
    </location>
</feature>
<feature type="compositionally biased region" description="Polar residues" evidence="3">
    <location>
        <begin position="506"/>
        <end position="528"/>
    </location>
</feature>
<feature type="active site" description="Nucleophile" evidence="1">
    <location>
        <position position="126"/>
    </location>
</feature>